<protein>
    <recommendedName>
        <fullName>Exportin-5</fullName>
        <shortName>Exp5</shortName>
    </recommendedName>
</protein>
<comment type="function">
    <text evidence="1">Mediates the nuclear export of proteins bearing a double-stranded RNA binding domain (dsRBD) and double-stranded RNAs (cargos).</text>
</comment>
<comment type="function">
    <text evidence="1">Mediates the nuclear export of micro-RNA precursors, which form short hairpins.</text>
</comment>
<comment type="subunit">
    <text evidence="1">Found in a nuclear export complex with RanGTP, exportin and pre-miRNA.</text>
</comment>
<comment type="subcellular location">
    <subcellularLocation>
        <location evidence="1">Nucleus</location>
    </subcellularLocation>
    <subcellularLocation>
        <location evidence="1">Cytoplasm</location>
    </subcellularLocation>
    <text evidence="1">Shuttles between the nucleus and the cytoplasm.</text>
</comment>
<comment type="similarity">
    <text evidence="3">Belongs to the exportin family.</text>
</comment>
<proteinExistence type="inferred from homology"/>
<evidence type="ECO:0000250" key="1">
    <source>
        <dbReference type="UniProtKB" id="Q9HAV4"/>
    </source>
</evidence>
<evidence type="ECO:0000255" key="2">
    <source>
        <dbReference type="PROSITE-ProRule" id="PRU00115"/>
    </source>
</evidence>
<evidence type="ECO:0000305" key="3"/>
<keyword id="KW-0963">Cytoplasm</keyword>
<keyword id="KW-0539">Nucleus</keyword>
<keyword id="KW-0653">Protein transport</keyword>
<keyword id="KW-1185">Reference proteome</keyword>
<keyword id="KW-0694">RNA-binding</keyword>
<keyword id="KW-0811">Translocation</keyword>
<keyword id="KW-0813">Transport</keyword>
<feature type="chain" id="PRO_0000328542" description="Exportin-5">
    <location>
        <begin position="1"/>
        <end position="1135"/>
    </location>
</feature>
<feature type="domain" description="Importin N-terminal" evidence="2">
    <location>
        <begin position="32"/>
        <end position="117"/>
    </location>
</feature>
<feature type="region of interest" description="Pre-siRNA binding" evidence="1">
    <location>
        <begin position="630"/>
        <end position="631"/>
    </location>
</feature>
<feature type="site" description="Pre-siRNA binding" evidence="1">
    <location>
        <position position="706"/>
    </location>
</feature>
<sequence length="1135" mass="131135">MNNDIILVVNQIEQALSLLHDPKSNNKQREESQVFLEEIKTRANAHSYAIAIITTSNNDILKHFALHIIETLVKNRWYECNDQERELIKKEILELMRRITSNEPKFIKEKLVTILVDVIKRDWPQRWMNLLTSLIEISKISDTQTELVLSTFGLLPHDIIFDTGSTSQVLSDQRRKDLMAGINLAVTSLFEYFYQLLESKYTQYKQPTPATTTTPQQTKQVIHLINVLLTTLRSYIEWVPSKVIFDHKLDQIFCQLILDVPFRMGACENLILFLGRKGRPDERIELIQTPFNFMENFLNSIKINSDFEDDYSFHKRITQALTILGTVHLNAYDDKHKIPNNYNIYLQLMLQMVSHPSILLSSFVLPFWHTFIKVESLELSYLEEVIKQIMETMLVKFVRIGDPEKSDSEQSKYSEIDFGTSKEWSNFFGGVRTRYLDIIKLITIQRREMAYIFIATKVADVLDALKANLNVASLSHEQTLVLESHSHILDSILLNIKDFTPESSLFFNKEQQQQPNIIQLTDRVLNLLFEINSTEPNITSFQIDCLQAYILYYQTNPESIKFLLNKIVPLIPFPGLDNPNRSFQNSVLHTRRRAISSLIGISTNISHLMKPYFDILYKSVVELFQKNVVTETEKVMLFHLLIVFSNNLPSYQQTLDFYKGILTPIIEQWVSLEMSTALSSPDAFIQYLGLSIADSQNLDATLVSRRKNIQYVASTLQIFWKKSQIPTNSSDELFAPFISNGISYNGKWPISSFVKQVLPGVLSLTRTLHQLWMPEHRAKIHPSLSTIFNLDDSITAPLLGFEYHKEQKSESSNVTFLRNILDCLRDACYEIVGYGFNHSDELFSLPDLPLVLLDSVFSYLESIENRHLKLLVKHILNYLIKNCPTKLEHTIFEPILPLLFSVLFNRIKAGWELIKLRSQKGEKENEKNEIVEDKILRDVSMEFLMCCSNIITQSPNYIFSSIDVMTPMVYGISSCLMAMDTPILKKSLIVSTQLLVDHEKVNDPKFFKLIGSEMFGCCIKILIVNKFAEFSNDIQSIIRLIYMKYYQICNYPQEILLSLPNITPPILQAFNKDLISTRSEKSQKVLFKKLLQDVIGIPLNKLKKESILDLPEKLFISKISDQSNENISNISNLFN</sequence>
<gene>
    <name type="primary">xpo5</name>
    <name type="ORF">DDB_G0284379</name>
</gene>
<organism>
    <name type="scientific">Dictyostelium discoideum</name>
    <name type="common">Social amoeba</name>
    <dbReference type="NCBI Taxonomy" id="44689"/>
    <lineage>
        <taxon>Eukaryota</taxon>
        <taxon>Amoebozoa</taxon>
        <taxon>Evosea</taxon>
        <taxon>Eumycetozoa</taxon>
        <taxon>Dictyostelia</taxon>
        <taxon>Dictyosteliales</taxon>
        <taxon>Dictyosteliaceae</taxon>
        <taxon>Dictyostelium</taxon>
    </lineage>
</organism>
<dbReference type="EMBL" id="AAFI02000064">
    <property type="protein sequence ID" value="EAL65238.1"/>
    <property type="molecule type" value="Genomic_DNA"/>
</dbReference>
<dbReference type="RefSeq" id="XP_638596.1">
    <property type="nucleotide sequence ID" value="XM_633504.1"/>
</dbReference>
<dbReference type="SMR" id="Q54PQ8"/>
<dbReference type="FunCoup" id="Q54PQ8">
    <property type="interactions" value="866"/>
</dbReference>
<dbReference type="STRING" id="44689.Q54PQ8"/>
<dbReference type="PaxDb" id="44689-DDB0237583"/>
<dbReference type="EnsemblProtists" id="EAL65238">
    <property type="protein sequence ID" value="EAL65238"/>
    <property type="gene ID" value="DDB_G0284379"/>
</dbReference>
<dbReference type="GeneID" id="8624567"/>
<dbReference type="KEGG" id="ddi:DDB_G0284379"/>
<dbReference type="dictyBase" id="DDB_G0284379">
    <property type="gene designation" value="xpo5"/>
</dbReference>
<dbReference type="VEuPathDB" id="AmoebaDB:DDB_G0284379"/>
<dbReference type="eggNOG" id="KOG2020">
    <property type="taxonomic scope" value="Eukaryota"/>
</dbReference>
<dbReference type="HOGENOM" id="CLU_002828_0_0_1"/>
<dbReference type="InParanoid" id="Q54PQ8"/>
<dbReference type="OMA" id="IAKRSWG"/>
<dbReference type="PhylomeDB" id="Q54PQ8"/>
<dbReference type="PRO" id="PR:Q54PQ8"/>
<dbReference type="Proteomes" id="UP000002195">
    <property type="component" value="Chromosome 4"/>
</dbReference>
<dbReference type="GO" id="GO:0005737">
    <property type="term" value="C:cytoplasm"/>
    <property type="evidence" value="ECO:0000318"/>
    <property type="project" value="GO_Central"/>
</dbReference>
<dbReference type="GO" id="GO:0005829">
    <property type="term" value="C:cytosol"/>
    <property type="evidence" value="ECO:0000250"/>
    <property type="project" value="dictyBase"/>
</dbReference>
<dbReference type="GO" id="GO:0005635">
    <property type="term" value="C:nuclear envelope"/>
    <property type="evidence" value="ECO:0000250"/>
    <property type="project" value="dictyBase"/>
</dbReference>
<dbReference type="GO" id="GO:0005634">
    <property type="term" value="C:nucleus"/>
    <property type="evidence" value="ECO:0000250"/>
    <property type="project" value="dictyBase"/>
</dbReference>
<dbReference type="GO" id="GO:0042565">
    <property type="term" value="C:RNA nuclear export complex"/>
    <property type="evidence" value="ECO:0000318"/>
    <property type="project" value="GO_Central"/>
</dbReference>
<dbReference type="GO" id="GO:0005049">
    <property type="term" value="F:nuclear export signal receptor activity"/>
    <property type="evidence" value="ECO:0000318"/>
    <property type="project" value="GO_Central"/>
</dbReference>
<dbReference type="GO" id="GO:0003723">
    <property type="term" value="F:RNA binding"/>
    <property type="evidence" value="ECO:0000318"/>
    <property type="project" value="GO_Central"/>
</dbReference>
<dbReference type="GO" id="GO:0031267">
    <property type="term" value="F:small GTPase binding"/>
    <property type="evidence" value="ECO:0007669"/>
    <property type="project" value="InterPro"/>
</dbReference>
<dbReference type="GO" id="GO:0000049">
    <property type="term" value="F:tRNA binding"/>
    <property type="evidence" value="ECO:0000250"/>
    <property type="project" value="dictyBase"/>
</dbReference>
<dbReference type="GO" id="GO:0006611">
    <property type="term" value="P:protein export from nucleus"/>
    <property type="evidence" value="ECO:0000250"/>
    <property type="project" value="dictyBase"/>
</dbReference>
<dbReference type="GO" id="GO:0006405">
    <property type="term" value="P:RNA export from nucleus"/>
    <property type="evidence" value="ECO:0000318"/>
    <property type="project" value="GO_Central"/>
</dbReference>
<dbReference type="FunFam" id="1.25.10.10:FF:000375">
    <property type="entry name" value="Predicted protein"/>
    <property type="match status" value="1"/>
</dbReference>
<dbReference type="Gene3D" id="1.25.10.10">
    <property type="entry name" value="Leucine-rich Repeat Variant"/>
    <property type="match status" value="1"/>
</dbReference>
<dbReference type="InterPro" id="IPR011989">
    <property type="entry name" value="ARM-like"/>
</dbReference>
<dbReference type="InterPro" id="IPR016024">
    <property type="entry name" value="ARM-type_fold"/>
</dbReference>
<dbReference type="InterPro" id="IPR013598">
    <property type="entry name" value="Exportin-1/Importin-b-like"/>
</dbReference>
<dbReference type="InterPro" id="IPR045478">
    <property type="entry name" value="Exportin-5_C"/>
</dbReference>
<dbReference type="InterPro" id="IPR001494">
    <property type="entry name" value="Importin-beta_N"/>
</dbReference>
<dbReference type="InterPro" id="IPR045065">
    <property type="entry name" value="XPO1/5"/>
</dbReference>
<dbReference type="PANTHER" id="PTHR11223">
    <property type="entry name" value="EXPORTIN 1/5"/>
    <property type="match status" value="1"/>
</dbReference>
<dbReference type="PANTHER" id="PTHR11223:SF3">
    <property type="entry name" value="EXPORTIN-5"/>
    <property type="match status" value="1"/>
</dbReference>
<dbReference type="Pfam" id="PF19273">
    <property type="entry name" value="Exportin-5"/>
    <property type="match status" value="1"/>
</dbReference>
<dbReference type="Pfam" id="PF03810">
    <property type="entry name" value="IBN_N"/>
    <property type="match status" value="1"/>
</dbReference>
<dbReference type="Pfam" id="PF08389">
    <property type="entry name" value="Xpo1"/>
    <property type="match status" value="1"/>
</dbReference>
<dbReference type="SMART" id="SM00913">
    <property type="entry name" value="IBN_N"/>
    <property type="match status" value="1"/>
</dbReference>
<dbReference type="SUPFAM" id="SSF48371">
    <property type="entry name" value="ARM repeat"/>
    <property type="match status" value="1"/>
</dbReference>
<dbReference type="PROSITE" id="PS50166">
    <property type="entry name" value="IMPORTIN_B_NT"/>
    <property type="match status" value="1"/>
</dbReference>
<name>XPO5_DICDI</name>
<reference key="1">
    <citation type="journal article" date="2005" name="Nature">
        <title>The genome of the social amoeba Dictyostelium discoideum.</title>
        <authorList>
            <person name="Eichinger L."/>
            <person name="Pachebat J.A."/>
            <person name="Gloeckner G."/>
            <person name="Rajandream M.A."/>
            <person name="Sucgang R."/>
            <person name="Berriman M."/>
            <person name="Song J."/>
            <person name="Olsen R."/>
            <person name="Szafranski K."/>
            <person name="Xu Q."/>
            <person name="Tunggal B."/>
            <person name="Kummerfeld S."/>
            <person name="Madera M."/>
            <person name="Konfortov B.A."/>
            <person name="Rivero F."/>
            <person name="Bankier A.T."/>
            <person name="Lehmann R."/>
            <person name="Hamlin N."/>
            <person name="Davies R."/>
            <person name="Gaudet P."/>
            <person name="Fey P."/>
            <person name="Pilcher K."/>
            <person name="Chen G."/>
            <person name="Saunders D."/>
            <person name="Sodergren E.J."/>
            <person name="Davis P."/>
            <person name="Kerhornou A."/>
            <person name="Nie X."/>
            <person name="Hall N."/>
            <person name="Anjard C."/>
            <person name="Hemphill L."/>
            <person name="Bason N."/>
            <person name="Farbrother P."/>
            <person name="Desany B."/>
            <person name="Just E."/>
            <person name="Morio T."/>
            <person name="Rost R."/>
            <person name="Churcher C.M."/>
            <person name="Cooper J."/>
            <person name="Haydock S."/>
            <person name="van Driessche N."/>
            <person name="Cronin A."/>
            <person name="Goodhead I."/>
            <person name="Muzny D.M."/>
            <person name="Mourier T."/>
            <person name="Pain A."/>
            <person name="Lu M."/>
            <person name="Harper D."/>
            <person name="Lindsay R."/>
            <person name="Hauser H."/>
            <person name="James K.D."/>
            <person name="Quiles M."/>
            <person name="Madan Babu M."/>
            <person name="Saito T."/>
            <person name="Buchrieser C."/>
            <person name="Wardroper A."/>
            <person name="Felder M."/>
            <person name="Thangavelu M."/>
            <person name="Johnson D."/>
            <person name="Knights A."/>
            <person name="Loulseged H."/>
            <person name="Mungall K.L."/>
            <person name="Oliver K."/>
            <person name="Price C."/>
            <person name="Quail M.A."/>
            <person name="Urushihara H."/>
            <person name="Hernandez J."/>
            <person name="Rabbinowitsch E."/>
            <person name="Steffen D."/>
            <person name="Sanders M."/>
            <person name="Ma J."/>
            <person name="Kohara Y."/>
            <person name="Sharp S."/>
            <person name="Simmonds M.N."/>
            <person name="Spiegler S."/>
            <person name="Tivey A."/>
            <person name="Sugano S."/>
            <person name="White B."/>
            <person name="Walker D."/>
            <person name="Woodward J.R."/>
            <person name="Winckler T."/>
            <person name="Tanaka Y."/>
            <person name="Shaulsky G."/>
            <person name="Schleicher M."/>
            <person name="Weinstock G.M."/>
            <person name="Rosenthal A."/>
            <person name="Cox E.C."/>
            <person name="Chisholm R.L."/>
            <person name="Gibbs R.A."/>
            <person name="Loomis W.F."/>
            <person name="Platzer M."/>
            <person name="Kay R.R."/>
            <person name="Williams J.G."/>
            <person name="Dear P.H."/>
            <person name="Noegel A.A."/>
            <person name="Barrell B.G."/>
            <person name="Kuspa A."/>
        </authorList>
    </citation>
    <scope>NUCLEOTIDE SEQUENCE [LARGE SCALE GENOMIC DNA]</scope>
    <source>
        <strain>AX4</strain>
    </source>
</reference>
<accession>Q54PQ8</accession>